<organism>
    <name type="scientific">Ehrlichia chaffeensis (strain ATCC CRL-10679 / Arkansas)</name>
    <dbReference type="NCBI Taxonomy" id="205920"/>
    <lineage>
        <taxon>Bacteria</taxon>
        <taxon>Pseudomonadati</taxon>
        <taxon>Pseudomonadota</taxon>
        <taxon>Alphaproteobacteria</taxon>
        <taxon>Rickettsiales</taxon>
        <taxon>Anaplasmataceae</taxon>
        <taxon>Ehrlichia</taxon>
    </lineage>
</organism>
<comment type="function">
    <text evidence="1">One of two assembly initiator proteins, it binds directly to the 5'-end of the 23S rRNA, where it nucleates assembly of the 50S subunit.</text>
</comment>
<comment type="function">
    <text evidence="1">One of the proteins that surrounds the polypeptide exit tunnel on the outside of the subunit.</text>
</comment>
<comment type="subunit">
    <text evidence="1">Part of the 50S ribosomal subunit.</text>
</comment>
<comment type="similarity">
    <text evidence="1">Belongs to the universal ribosomal protein uL24 family.</text>
</comment>
<proteinExistence type="inferred from homology"/>
<dbReference type="EMBL" id="CP000236">
    <property type="protein sequence ID" value="ABD44748.1"/>
    <property type="molecule type" value="Genomic_DNA"/>
</dbReference>
<dbReference type="RefSeq" id="WP_011452587.1">
    <property type="nucleotide sequence ID" value="NC_007799.1"/>
</dbReference>
<dbReference type="SMR" id="Q2GH45"/>
<dbReference type="STRING" id="205920.ECH_0420"/>
<dbReference type="KEGG" id="ech:ECH_0420"/>
<dbReference type="eggNOG" id="COG0198">
    <property type="taxonomic scope" value="Bacteria"/>
</dbReference>
<dbReference type="HOGENOM" id="CLU_093315_2_2_5"/>
<dbReference type="OrthoDB" id="9807419at2"/>
<dbReference type="Proteomes" id="UP000008320">
    <property type="component" value="Chromosome"/>
</dbReference>
<dbReference type="GO" id="GO:1990904">
    <property type="term" value="C:ribonucleoprotein complex"/>
    <property type="evidence" value="ECO:0007669"/>
    <property type="project" value="UniProtKB-KW"/>
</dbReference>
<dbReference type="GO" id="GO:0005840">
    <property type="term" value="C:ribosome"/>
    <property type="evidence" value="ECO:0007669"/>
    <property type="project" value="UniProtKB-KW"/>
</dbReference>
<dbReference type="GO" id="GO:0019843">
    <property type="term" value="F:rRNA binding"/>
    <property type="evidence" value="ECO:0007669"/>
    <property type="project" value="UniProtKB-UniRule"/>
</dbReference>
<dbReference type="GO" id="GO:0003735">
    <property type="term" value="F:structural constituent of ribosome"/>
    <property type="evidence" value="ECO:0007669"/>
    <property type="project" value="InterPro"/>
</dbReference>
<dbReference type="GO" id="GO:0006412">
    <property type="term" value="P:translation"/>
    <property type="evidence" value="ECO:0007669"/>
    <property type="project" value="UniProtKB-UniRule"/>
</dbReference>
<dbReference type="CDD" id="cd06089">
    <property type="entry name" value="KOW_RPL26"/>
    <property type="match status" value="1"/>
</dbReference>
<dbReference type="Gene3D" id="2.30.30.30">
    <property type="match status" value="1"/>
</dbReference>
<dbReference type="HAMAP" id="MF_01326_B">
    <property type="entry name" value="Ribosomal_uL24_B"/>
    <property type="match status" value="1"/>
</dbReference>
<dbReference type="InterPro" id="IPR005824">
    <property type="entry name" value="KOW"/>
</dbReference>
<dbReference type="InterPro" id="IPR014722">
    <property type="entry name" value="Rib_uL2_dom2"/>
</dbReference>
<dbReference type="InterPro" id="IPR003256">
    <property type="entry name" value="Ribosomal_uL24"/>
</dbReference>
<dbReference type="InterPro" id="IPR005825">
    <property type="entry name" value="Ribosomal_uL24_CS"/>
</dbReference>
<dbReference type="InterPro" id="IPR041988">
    <property type="entry name" value="Ribosomal_uL24_KOW"/>
</dbReference>
<dbReference type="InterPro" id="IPR008991">
    <property type="entry name" value="Translation_prot_SH3-like_sf"/>
</dbReference>
<dbReference type="NCBIfam" id="TIGR01079">
    <property type="entry name" value="rplX_bact"/>
    <property type="match status" value="1"/>
</dbReference>
<dbReference type="PANTHER" id="PTHR12903">
    <property type="entry name" value="MITOCHONDRIAL RIBOSOMAL PROTEIN L24"/>
    <property type="match status" value="1"/>
</dbReference>
<dbReference type="Pfam" id="PF00467">
    <property type="entry name" value="KOW"/>
    <property type="match status" value="1"/>
</dbReference>
<dbReference type="Pfam" id="PF17136">
    <property type="entry name" value="ribosomal_L24"/>
    <property type="match status" value="1"/>
</dbReference>
<dbReference type="SMART" id="SM00739">
    <property type="entry name" value="KOW"/>
    <property type="match status" value="1"/>
</dbReference>
<dbReference type="SUPFAM" id="SSF50104">
    <property type="entry name" value="Translation proteins SH3-like domain"/>
    <property type="match status" value="1"/>
</dbReference>
<dbReference type="PROSITE" id="PS01108">
    <property type="entry name" value="RIBOSOMAL_L24"/>
    <property type="match status" value="1"/>
</dbReference>
<evidence type="ECO:0000255" key="1">
    <source>
        <dbReference type="HAMAP-Rule" id="MF_01326"/>
    </source>
</evidence>
<evidence type="ECO:0000305" key="2"/>
<protein>
    <recommendedName>
        <fullName evidence="1">Large ribosomal subunit protein uL24</fullName>
    </recommendedName>
    <alternativeName>
        <fullName evidence="2">50S ribosomal protein L24</fullName>
    </alternativeName>
</protein>
<feature type="chain" id="PRO_0000241596" description="Large ribosomal subunit protein uL24">
    <location>
        <begin position="1"/>
        <end position="109"/>
    </location>
</feature>
<keyword id="KW-1185">Reference proteome</keyword>
<keyword id="KW-0687">Ribonucleoprotein</keyword>
<keyword id="KW-0689">Ribosomal protein</keyword>
<keyword id="KW-0694">RNA-binding</keyword>
<keyword id="KW-0699">rRNA-binding</keyword>
<sequence length="109" mass="11728">MGMKIIAGDDVIVISGKDKGKMGKVIKVLKKKHCGKDVSFAIVSGVNVCRKSVKATQKSDGGIISVEKPINLSNIALFDSTLGIQTRVGYKFIGEKKVRFMKSSGKVIE</sequence>
<name>RL24_EHRCR</name>
<accession>Q2GH45</accession>
<gene>
    <name evidence="1" type="primary">rplX</name>
    <name type="ordered locus">ECH_0420</name>
</gene>
<reference key="1">
    <citation type="journal article" date="2006" name="PLoS Genet.">
        <title>Comparative genomics of emerging human ehrlichiosis agents.</title>
        <authorList>
            <person name="Dunning Hotopp J.C."/>
            <person name="Lin M."/>
            <person name="Madupu R."/>
            <person name="Crabtree J."/>
            <person name="Angiuoli S.V."/>
            <person name="Eisen J.A."/>
            <person name="Seshadri R."/>
            <person name="Ren Q."/>
            <person name="Wu M."/>
            <person name="Utterback T.R."/>
            <person name="Smith S."/>
            <person name="Lewis M."/>
            <person name="Khouri H."/>
            <person name="Zhang C."/>
            <person name="Niu H."/>
            <person name="Lin Q."/>
            <person name="Ohashi N."/>
            <person name="Zhi N."/>
            <person name="Nelson W.C."/>
            <person name="Brinkac L.M."/>
            <person name="Dodson R.J."/>
            <person name="Rosovitz M.J."/>
            <person name="Sundaram J.P."/>
            <person name="Daugherty S.C."/>
            <person name="Davidsen T."/>
            <person name="Durkin A.S."/>
            <person name="Gwinn M.L."/>
            <person name="Haft D.H."/>
            <person name="Selengut J.D."/>
            <person name="Sullivan S.A."/>
            <person name="Zafar N."/>
            <person name="Zhou L."/>
            <person name="Benahmed F."/>
            <person name="Forberger H."/>
            <person name="Halpin R."/>
            <person name="Mulligan S."/>
            <person name="Robinson J."/>
            <person name="White O."/>
            <person name="Rikihisa Y."/>
            <person name="Tettelin H."/>
        </authorList>
    </citation>
    <scope>NUCLEOTIDE SEQUENCE [LARGE SCALE GENOMIC DNA]</scope>
    <source>
        <strain>ATCC CRL-10679 / Arkansas</strain>
    </source>
</reference>